<feature type="chain" id="PRO_1000056014" description="Large ribosomal subunit protein uL30">
    <location>
        <begin position="1"/>
        <end position="61"/>
    </location>
</feature>
<gene>
    <name evidence="1" type="primary">rpmD</name>
    <name type="ordered locus">BAD_0339</name>
</gene>
<accession>A1A087</accession>
<sequence>MMTNLNIKLHHGLVNSTPKQRAAAQTLGLNKIGKTVTREDTPALRGQLQVLRHLITVEEAD</sequence>
<organism>
    <name type="scientific">Bifidobacterium adolescentis (strain ATCC 15703 / DSM 20083 / NCTC 11814 / E194a)</name>
    <dbReference type="NCBI Taxonomy" id="367928"/>
    <lineage>
        <taxon>Bacteria</taxon>
        <taxon>Bacillati</taxon>
        <taxon>Actinomycetota</taxon>
        <taxon>Actinomycetes</taxon>
        <taxon>Bifidobacteriales</taxon>
        <taxon>Bifidobacteriaceae</taxon>
        <taxon>Bifidobacterium</taxon>
    </lineage>
</organism>
<dbReference type="EMBL" id="AP009256">
    <property type="protein sequence ID" value="BAF39120.1"/>
    <property type="molecule type" value="Genomic_DNA"/>
</dbReference>
<dbReference type="SMR" id="A1A087"/>
<dbReference type="STRING" id="367928.BAD_0339"/>
<dbReference type="PaxDb" id="1680-BADO_0346"/>
<dbReference type="KEGG" id="bad:BAD_0339"/>
<dbReference type="HOGENOM" id="CLU_131047_2_0_11"/>
<dbReference type="Proteomes" id="UP000008702">
    <property type="component" value="Chromosome"/>
</dbReference>
<dbReference type="GO" id="GO:0015934">
    <property type="term" value="C:large ribosomal subunit"/>
    <property type="evidence" value="ECO:0007669"/>
    <property type="project" value="InterPro"/>
</dbReference>
<dbReference type="GO" id="GO:0003735">
    <property type="term" value="F:structural constituent of ribosome"/>
    <property type="evidence" value="ECO:0007669"/>
    <property type="project" value="InterPro"/>
</dbReference>
<dbReference type="GO" id="GO:0006412">
    <property type="term" value="P:translation"/>
    <property type="evidence" value="ECO:0007669"/>
    <property type="project" value="UniProtKB-UniRule"/>
</dbReference>
<dbReference type="CDD" id="cd01658">
    <property type="entry name" value="Ribosomal_L30"/>
    <property type="match status" value="1"/>
</dbReference>
<dbReference type="Gene3D" id="3.30.1390.20">
    <property type="entry name" value="Ribosomal protein L30, ferredoxin-like fold domain"/>
    <property type="match status" value="1"/>
</dbReference>
<dbReference type="HAMAP" id="MF_01371_B">
    <property type="entry name" value="Ribosomal_uL30_B"/>
    <property type="match status" value="1"/>
</dbReference>
<dbReference type="InterPro" id="IPR036919">
    <property type="entry name" value="Ribo_uL30_ferredoxin-like_sf"/>
</dbReference>
<dbReference type="InterPro" id="IPR005996">
    <property type="entry name" value="Ribosomal_uL30_bac-type"/>
</dbReference>
<dbReference type="InterPro" id="IPR016082">
    <property type="entry name" value="Ribosomal_uL30_ferredoxin-like"/>
</dbReference>
<dbReference type="NCBIfam" id="TIGR01308">
    <property type="entry name" value="rpmD_bact"/>
    <property type="match status" value="1"/>
</dbReference>
<dbReference type="Pfam" id="PF00327">
    <property type="entry name" value="Ribosomal_L30"/>
    <property type="match status" value="1"/>
</dbReference>
<dbReference type="PIRSF" id="PIRSF002211">
    <property type="entry name" value="Ribosomal_L30_bac-type"/>
    <property type="match status" value="1"/>
</dbReference>
<dbReference type="SUPFAM" id="SSF55129">
    <property type="entry name" value="Ribosomal protein L30p/L7e"/>
    <property type="match status" value="1"/>
</dbReference>
<keyword id="KW-1185">Reference proteome</keyword>
<keyword id="KW-0687">Ribonucleoprotein</keyword>
<keyword id="KW-0689">Ribosomal protein</keyword>
<comment type="subunit">
    <text evidence="1">Part of the 50S ribosomal subunit.</text>
</comment>
<comment type="similarity">
    <text evidence="1">Belongs to the universal ribosomal protein uL30 family.</text>
</comment>
<proteinExistence type="inferred from homology"/>
<protein>
    <recommendedName>
        <fullName evidence="1">Large ribosomal subunit protein uL30</fullName>
    </recommendedName>
    <alternativeName>
        <fullName evidence="2">50S ribosomal protein L30</fullName>
    </alternativeName>
</protein>
<reference key="1">
    <citation type="submission" date="2006-12" db="EMBL/GenBank/DDBJ databases">
        <title>Bifidobacterium adolescentis complete genome sequence.</title>
        <authorList>
            <person name="Suzuki T."/>
            <person name="Tsuda Y."/>
            <person name="Kanou N."/>
            <person name="Inoue T."/>
            <person name="Kumazaki K."/>
            <person name="Nagano S."/>
            <person name="Hirai S."/>
            <person name="Tanaka K."/>
            <person name="Watanabe K."/>
        </authorList>
    </citation>
    <scope>NUCLEOTIDE SEQUENCE [LARGE SCALE GENOMIC DNA]</scope>
    <source>
        <strain>ATCC 15703 / DSM 20083 / NCTC 11814 / E194a</strain>
    </source>
</reference>
<evidence type="ECO:0000255" key="1">
    <source>
        <dbReference type="HAMAP-Rule" id="MF_01371"/>
    </source>
</evidence>
<evidence type="ECO:0000305" key="2"/>
<name>RL30_BIFAA</name>